<protein>
    <recommendedName>
        <fullName evidence="1">Urease subunit gamma</fullName>
        <ecNumber evidence="1">3.5.1.5</ecNumber>
    </recommendedName>
    <alternativeName>
        <fullName evidence="1">Urea amidohydrolase subunit gamma</fullName>
    </alternativeName>
</protein>
<keyword id="KW-0963">Cytoplasm</keyword>
<keyword id="KW-0378">Hydrolase</keyword>
<keyword id="KW-1185">Reference proteome</keyword>
<gene>
    <name evidence="1" type="primary">ureA</name>
    <name type="ordered locus">Avi_3485</name>
</gene>
<feature type="chain" id="PRO_1000199849" description="Urease subunit gamma">
    <location>
        <begin position="1"/>
        <end position="100"/>
    </location>
</feature>
<evidence type="ECO:0000255" key="1">
    <source>
        <dbReference type="HAMAP-Rule" id="MF_00739"/>
    </source>
</evidence>
<reference key="1">
    <citation type="journal article" date="2009" name="J. Bacteriol.">
        <title>Genome sequences of three Agrobacterium biovars help elucidate the evolution of multichromosome genomes in bacteria.</title>
        <authorList>
            <person name="Slater S.C."/>
            <person name="Goldman B.S."/>
            <person name="Goodner B."/>
            <person name="Setubal J.C."/>
            <person name="Farrand S.K."/>
            <person name="Nester E.W."/>
            <person name="Burr T.J."/>
            <person name="Banta L."/>
            <person name="Dickerman A.W."/>
            <person name="Paulsen I."/>
            <person name="Otten L."/>
            <person name="Suen G."/>
            <person name="Welch R."/>
            <person name="Almeida N.F."/>
            <person name="Arnold F."/>
            <person name="Burton O.T."/>
            <person name="Du Z."/>
            <person name="Ewing A."/>
            <person name="Godsy E."/>
            <person name="Heisel S."/>
            <person name="Houmiel K.L."/>
            <person name="Jhaveri J."/>
            <person name="Lu J."/>
            <person name="Miller N.M."/>
            <person name="Norton S."/>
            <person name="Chen Q."/>
            <person name="Phoolcharoen W."/>
            <person name="Ohlin V."/>
            <person name="Ondrusek D."/>
            <person name="Pride N."/>
            <person name="Stricklin S.L."/>
            <person name="Sun J."/>
            <person name="Wheeler C."/>
            <person name="Wilson L."/>
            <person name="Zhu H."/>
            <person name="Wood D.W."/>
        </authorList>
    </citation>
    <scope>NUCLEOTIDE SEQUENCE [LARGE SCALE GENOMIC DNA]</scope>
    <source>
        <strain>ATCC BAA-846 / DSM 112012 / S4</strain>
    </source>
</reference>
<organism>
    <name type="scientific">Allorhizobium ampelinum (strain ATCC BAA-846 / DSM 112012 / S4)</name>
    <name type="common">Agrobacterium vitis (strain S4)</name>
    <dbReference type="NCBI Taxonomy" id="311402"/>
    <lineage>
        <taxon>Bacteria</taxon>
        <taxon>Pseudomonadati</taxon>
        <taxon>Pseudomonadota</taxon>
        <taxon>Alphaproteobacteria</taxon>
        <taxon>Hyphomicrobiales</taxon>
        <taxon>Rhizobiaceae</taxon>
        <taxon>Rhizobium/Agrobacterium group</taxon>
        <taxon>Allorhizobium</taxon>
        <taxon>Allorhizobium ampelinum</taxon>
    </lineage>
</organism>
<accession>B9JR86</accession>
<name>URE3_ALLAM</name>
<proteinExistence type="inferred from homology"/>
<sequence>MNLSPREKDKLLISMAAMVARRRLERGVKLNYPEAIALISDFVVEGARDGRAVSELMEAGAHVITRDQVMDGIAEMIHDVQVEATFPDGTKLVTVHEPIR</sequence>
<dbReference type="EC" id="3.5.1.5" evidence="1"/>
<dbReference type="EMBL" id="CP000633">
    <property type="protein sequence ID" value="ACM37497.1"/>
    <property type="molecule type" value="Genomic_DNA"/>
</dbReference>
<dbReference type="RefSeq" id="WP_015916910.1">
    <property type="nucleotide sequence ID" value="NC_011989.1"/>
</dbReference>
<dbReference type="SMR" id="B9JR86"/>
<dbReference type="STRING" id="311402.Avi_3485"/>
<dbReference type="KEGG" id="avi:Avi_3485"/>
<dbReference type="eggNOG" id="COG0831">
    <property type="taxonomic scope" value="Bacteria"/>
</dbReference>
<dbReference type="HOGENOM" id="CLU_145825_1_0_5"/>
<dbReference type="UniPathway" id="UPA00258">
    <property type="reaction ID" value="UER00370"/>
</dbReference>
<dbReference type="Proteomes" id="UP000001596">
    <property type="component" value="Chromosome 1"/>
</dbReference>
<dbReference type="GO" id="GO:0005737">
    <property type="term" value="C:cytoplasm"/>
    <property type="evidence" value="ECO:0007669"/>
    <property type="project" value="UniProtKB-SubCell"/>
</dbReference>
<dbReference type="GO" id="GO:0016151">
    <property type="term" value="F:nickel cation binding"/>
    <property type="evidence" value="ECO:0007669"/>
    <property type="project" value="InterPro"/>
</dbReference>
<dbReference type="GO" id="GO:0009039">
    <property type="term" value="F:urease activity"/>
    <property type="evidence" value="ECO:0007669"/>
    <property type="project" value="UniProtKB-UniRule"/>
</dbReference>
<dbReference type="GO" id="GO:0043419">
    <property type="term" value="P:urea catabolic process"/>
    <property type="evidence" value="ECO:0007669"/>
    <property type="project" value="UniProtKB-UniRule"/>
</dbReference>
<dbReference type="CDD" id="cd00390">
    <property type="entry name" value="Urease_gamma"/>
    <property type="match status" value="1"/>
</dbReference>
<dbReference type="Gene3D" id="3.30.280.10">
    <property type="entry name" value="Urease, gamma-like subunit"/>
    <property type="match status" value="1"/>
</dbReference>
<dbReference type="HAMAP" id="MF_00739">
    <property type="entry name" value="Urease_gamma"/>
    <property type="match status" value="1"/>
</dbReference>
<dbReference type="InterPro" id="IPR012010">
    <property type="entry name" value="Urease_gamma"/>
</dbReference>
<dbReference type="InterPro" id="IPR002026">
    <property type="entry name" value="Urease_gamma/gamma-beta_su"/>
</dbReference>
<dbReference type="InterPro" id="IPR036463">
    <property type="entry name" value="Urease_gamma_sf"/>
</dbReference>
<dbReference type="InterPro" id="IPR050069">
    <property type="entry name" value="Urease_subunit"/>
</dbReference>
<dbReference type="NCBIfam" id="NF009712">
    <property type="entry name" value="PRK13241.1"/>
    <property type="match status" value="1"/>
</dbReference>
<dbReference type="NCBIfam" id="TIGR00193">
    <property type="entry name" value="urease_gam"/>
    <property type="match status" value="1"/>
</dbReference>
<dbReference type="PANTHER" id="PTHR33569">
    <property type="entry name" value="UREASE"/>
    <property type="match status" value="1"/>
</dbReference>
<dbReference type="PANTHER" id="PTHR33569:SF1">
    <property type="entry name" value="UREASE"/>
    <property type="match status" value="1"/>
</dbReference>
<dbReference type="Pfam" id="PF00547">
    <property type="entry name" value="Urease_gamma"/>
    <property type="match status" value="1"/>
</dbReference>
<dbReference type="PIRSF" id="PIRSF001223">
    <property type="entry name" value="Urease_gamma"/>
    <property type="match status" value="1"/>
</dbReference>
<dbReference type="SUPFAM" id="SSF54111">
    <property type="entry name" value="Urease, gamma-subunit"/>
    <property type="match status" value="1"/>
</dbReference>
<comment type="catalytic activity">
    <reaction evidence="1">
        <text>urea + 2 H2O + H(+) = hydrogencarbonate + 2 NH4(+)</text>
        <dbReference type="Rhea" id="RHEA:20557"/>
        <dbReference type="ChEBI" id="CHEBI:15377"/>
        <dbReference type="ChEBI" id="CHEBI:15378"/>
        <dbReference type="ChEBI" id="CHEBI:16199"/>
        <dbReference type="ChEBI" id="CHEBI:17544"/>
        <dbReference type="ChEBI" id="CHEBI:28938"/>
        <dbReference type="EC" id="3.5.1.5"/>
    </reaction>
</comment>
<comment type="pathway">
    <text evidence="1">Nitrogen metabolism; urea degradation; CO(2) and NH(3) from urea (urease route): step 1/1.</text>
</comment>
<comment type="subunit">
    <text evidence="1">Heterotrimer of UreA (gamma), UreB (beta) and UreC (alpha) subunits. Three heterotrimers associate to form the active enzyme.</text>
</comment>
<comment type="subcellular location">
    <subcellularLocation>
        <location evidence="1">Cytoplasm</location>
    </subcellularLocation>
</comment>
<comment type="similarity">
    <text evidence="1">Belongs to the urease gamma subunit family.</text>
</comment>